<organism>
    <name type="scientific">Thermoplasma volcanium (strain ATCC 51530 / DSM 4299 / JCM 9571 / NBRC 15438 / GSS1)</name>
    <dbReference type="NCBI Taxonomy" id="273116"/>
    <lineage>
        <taxon>Archaea</taxon>
        <taxon>Methanobacteriati</taxon>
        <taxon>Thermoplasmatota</taxon>
        <taxon>Thermoplasmata</taxon>
        <taxon>Thermoplasmatales</taxon>
        <taxon>Thermoplasmataceae</taxon>
        <taxon>Thermoplasma</taxon>
    </lineage>
</organism>
<sequence>MEVNRMNKTGIAHIYASQNNTIIHVTDPTGAETIAMVSGGMVVKNDRDQASPYAAMKAADMVSETLKEHEITDLIIKVRAPGGNKSKIPGPGAQAAIRALSRAGLKIVRIEEVTPIPHDGTKKKGGKRGRRV</sequence>
<protein>
    <recommendedName>
        <fullName evidence="1">Small ribosomal subunit protein uS11</fullName>
    </recommendedName>
    <alternativeName>
        <fullName evidence="2">30S ribosomal protein S11</fullName>
    </alternativeName>
</protein>
<reference key="1">
    <citation type="journal article" date="2000" name="Proc. Natl. Acad. Sci. U.S.A.">
        <title>Archaeal adaptation to higher temperatures revealed by genomic sequence of Thermoplasma volcanium.</title>
        <authorList>
            <person name="Kawashima T."/>
            <person name="Amano N."/>
            <person name="Koike H."/>
            <person name="Makino S."/>
            <person name="Higuchi S."/>
            <person name="Kawashima-Ohya Y."/>
            <person name="Watanabe K."/>
            <person name="Yamazaki M."/>
            <person name="Kanehori K."/>
            <person name="Kawamoto T."/>
            <person name="Nunoshiba T."/>
            <person name="Yamamoto Y."/>
            <person name="Aramaki H."/>
            <person name="Makino K."/>
            <person name="Suzuki M."/>
        </authorList>
    </citation>
    <scope>NUCLEOTIDE SEQUENCE [LARGE SCALE GENOMIC DNA]</scope>
    <source>
        <strain>ATCC 51530 / DSM 4299 / JCM 9571 / NBRC 15438 / GSS1</strain>
    </source>
</reference>
<feature type="chain" id="PRO_0000123286" description="Small ribosomal subunit protein uS11">
    <location>
        <begin position="1"/>
        <end position="132"/>
    </location>
</feature>
<name>RS11_THEVO</name>
<accession>Q97B94</accession>
<gene>
    <name evidence="1" type="primary">rps11</name>
    <name type="ordered locus">TV0563</name>
    <name type="ORF">TVG0551085</name>
</gene>
<comment type="function">
    <text evidence="1">Located on the platform of the 30S subunit.</text>
</comment>
<comment type="subunit">
    <text evidence="1">Part of the 30S ribosomal subunit.</text>
</comment>
<comment type="similarity">
    <text evidence="1">Belongs to the universal ribosomal protein uS11 family.</text>
</comment>
<comment type="sequence caution" evidence="2">
    <conflict type="erroneous initiation">
        <sequence resource="EMBL-CDS" id="BAB59705"/>
    </conflict>
</comment>
<dbReference type="EMBL" id="BA000011">
    <property type="protein sequence ID" value="BAB59705.1"/>
    <property type="status" value="ALT_INIT"/>
    <property type="molecule type" value="Genomic_DNA"/>
</dbReference>
<dbReference type="RefSeq" id="WP_048054090.1">
    <property type="nucleotide sequence ID" value="NC_002689.2"/>
</dbReference>
<dbReference type="SMR" id="Q97B94"/>
<dbReference type="STRING" id="273116.gene:9381348"/>
<dbReference type="PaxDb" id="273116-14324778"/>
<dbReference type="KEGG" id="tvo:TVG0551085"/>
<dbReference type="eggNOG" id="arCOG04240">
    <property type="taxonomic scope" value="Archaea"/>
</dbReference>
<dbReference type="HOGENOM" id="CLU_072439_6_1_2"/>
<dbReference type="OrthoDB" id="12054at2157"/>
<dbReference type="PhylomeDB" id="Q97B94"/>
<dbReference type="Proteomes" id="UP000001017">
    <property type="component" value="Chromosome"/>
</dbReference>
<dbReference type="GO" id="GO:1990904">
    <property type="term" value="C:ribonucleoprotein complex"/>
    <property type="evidence" value="ECO:0007669"/>
    <property type="project" value="UniProtKB-KW"/>
</dbReference>
<dbReference type="GO" id="GO:0005840">
    <property type="term" value="C:ribosome"/>
    <property type="evidence" value="ECO:0007669"/>
    <property type="project" value="UniProtKB-KW"/>
</dbReference>
<dbReference type="GO" id="GO:0019843">
    <property type="term" value="F:rRNA binding"/>
    <property type="evidence" value="ECO:0007669"/>
    <property type="project" value="UniProtKB-UniRule"/>
</dbReference>
<dbReference type="GO" id="GO:0003735">
    <property type="term" value="F:structural constituent of ribosome"/>
    <property type="evidence" value="ECO:0007669"/>
    <property type="project" value="InterPro"/>
</dbReference>
<dbReference type="GO" id="GO:0006412">
    <property type="term" value="P:translation"/>
    <property type="evidence" value="ECO:0007669"/>
    <property type="project" value="UniProtKB-UniRule"/>
</dbReference>
<dbReference type="FunFam" id="3.30.420.80:FF:000018">
    <property type="entry name" value="40S ribosomal protein S14"/>
    <property type="match status" value="1"/>
</dbReference>
<dbReference type="Gene3D" id="3.30.420.80">
    <property type="entry name" value="Ribosomal protein S11"/>
    <property type="match status" value="1"/>
</dbReference>
<dbReference type="HAMAP" id="MF_01310">
    <property type="entry name" value="Ribosomal_uS11"/>
    <property type="match status" value="1"/>
</dbReference>
<dbReference type="InterPro" id="IPR001971">
    <property type="entry name" value="Ribosomal_uS11"/>
</dbReference>
<dbReference type="InterPro" id="IPR019961">
    <property type="entry name" value="Ribosomal_uS11_archaeal"/>
</dbReference>
<dbReference type="InterPro" id="IPR018102">
    <property type="entry name" value="Ribosomal_uS11_CS"/>
</dbReference>
<dbReference type="InterPro" id="IPR036967">
    <property type="entry name" value="Ribosomal_uS11_sf"/>
</dbReference>
<dbReference type="NCBIfam" id="TIGR03628">
    <property type="entry name" value="arch_S11P"/>
    <property type="match status" value="1"/>
</dbReference>
<dbReference type="NCBIfam" id="NF007176">
    <property type="entry name" value="PRK09607.1"/>
    <property type="match status" value="1"/>
</dbReference>
<dbReference type="PANTHER" id="PTHR11759">
    <property type="entry name" value="40S RIBOSOMAL PROTEIN S14/30S RIBOSOMAL PROTEIN S11"/>
    <property type="match status" value="1"/>
</dbReference>
<dbReference type="Pfam" id="PF00411">
    <property type="entry name" value="Ribosomal_S11"/>
    <property type="match status" value="1"/>
</dbReference>
<dbReference type="PIRSF" id="PIRSF002131">
    <property type="entry name" value="Ribosomal_S11"/>
    <property type="match status" value="1"/>
</dbReference>
<dbReference type="SUPFAM" id="SSF53137">
    <property type="entry name" value="Translational machinery components"/>
    <property type="match status" value="1"/>
</dbReference>
<dbReference type="PROSITE" id="PS00054">
    <property type="entry name" value="RIBOSOMAL_S11"/>
    <property type="match status" value="1"/>
</dbReference>
<evidence type="ECO:0000255" key="1">
    <source>
        <dbReference type="HAMAP-Rule" id="MF_01310"/>
    </source>
</evidence>
<evidence type="ECO:0000305" key="2"/>
<proteinExistence type="inferred from homology"/>
<keyword id="KW-0687">Ribonucleoprotein</keyword>
<keyword id="KW-0689">Ribosomal protein</keyword>
<keyword id="KW-0694">RNA-binding</keyword>
<keyword id="KW-0699">rRNA-binding</keyword>